<keyword id="KW-0143">Chaperone</keyword>
<keyword id="KW-0963">Cytoplasm</keyword>
<keyword id="KW-0533">Nickel</keyword>
<keyword id="KW-0996">Nickel insertion</keyword>
<keyword id="KW-1185">Reference proteome</keyword>
<proteinExistence type="inferred from homology"/>
<gene>
    <name evidence="1" type="primary">ureE</name>
    <name type="ordered locus">Rfer_3406</name>
</gene>
<feature type="chain" id="PRO_1000083909" description="Urease accessory protein UreE">
    <location>
        <begin position="1"/>
        <end position="174"/>
    </location>
</feature>
<feature type="region of interest" description="Disordered" evidence="2">
    <location>
        <begin position="146"/>
        <end position="174"/>
    </location>
</feature>
<feature type="compositionally biased region" description="Basic and acidic residues" evidence="2">
    <location>
        <begin position="154"/>
        <end position="166"/>
    </location>
</feature>
<protein>
    <recommendedName>
        <fullName evidence="1">Urease accessory protein UreE</fullName>
    </recommendedName>
</protein>
<name>UREE_ALBFT</name>
<organism>
    <name type="scientific">Albidiferax ferrireducens (strain ATCC BAA-621 / DSM 15236 / T118)</name>
    <name type="common">Rhodoferax ferrireducens</name>
    <dbReference type="NCBI Taxonomy" id="338969"/>
    <lineage>
        <taxon>Bacteria</taxon>
        <taxon>Pseudomonadati</taxon>
        <taxon>Pseudomonadota</taxon>
        <taxon>Betaproteobacteria</taxon>
        <taxon>Burkholderiales</taxon>
        <taxon>Comamonadaceae</taxon>
        <taxon>Rhodoferax</taxon>
    </lineage>
</organism>
<dbReference type="EMBL" id="CP000267">
    <property type="protein sequence ID" value="ABD71115.1"/>
    <property type="molecule type" value="Genomic_DNA"/>
</dbReference>
<dbReference type="RefSeq" id="WP_011465678.1">
    <property type="nucleotide sequence ID" value="NC_007908.1"/>
</dbReference>
<dbReference type="SMR" id="Q21SY8"/>
<dbReference type="STRING" id="338969.Rfer_3406"/>
<dbReference type="KEGG" id="rfr:Rfer_3406"/>
<dbReference type="eggNOG" id="COG2371">
    <property type="taxonomic scope" value="Bacteria"/>
</dbReference>
<dbReference type="HOGENOM" id="CLU_093757_2_0_4"/>
<dbReference type="OrthoDB" id="5421304at2"/>
<dbReference type="Proteomes" id="UP000008332">
    <property type="component" value="Chromosome"/>
</dbReference>
<dbReference type="GO" id="GO:0005737">
    <property type="term" value="C:cytoplasm"/>
    <property type="evidence" value="ECO:0007669"/>
    <property type="project" value="UniProtKB-SubCell"/>
</dbReference>
<dbReference type="GO" id="GO:0016151">
    <property type="term" value="F:nickel cation binding"/>
    <property type="evidence" value="ECO:0007669"/>
    <property type="project" value="UniProtKB-UniRule"/>
</dbReference>
<dbReference type="GO" id="GO:0051082">
    <property type="term" value="F:unfolded protein binding"/>
    <property type="evidence" value="ECO:0007669"/>
    <property type="project" value="UniProtKB-UniRule"/>
</dbReference>
<dbReference type="GO" id="GO:0006457">
    <property type="term" value="P:protein folding"/>
    <property type="evidence" value="ECO:0007669"/>
    <property type="project" value="InterPro"/>
</dbReference>
<dbReference type="GO" id="GO:0065003">
    <property type="term" value="P:protein-containing complex assembly"/>
    <property type="evidence" value="ECO:0007669"/>
    <property type="project" value="InterPro"/>
</dbReference>
<dbReference type="GO" id="GO:0019627">
    <property type="term" value="P:urea metabolic process"/>
    <property type="evidence" value="ECO:0007669"/>
    <property type="project" value="InterPro"/>
</dbReference>
<dbReference type="CDD" id="cd00571">
    <property type="entry name" value="UreE"/>
    <property type="match status" value="1"/>
</dbReference>
<dbReference type="Gene3D" id="2.60.260.20">
    <property type="entry name" value="Urease metallochaperone UreE, N-terminal domain"/>
    <property type="match status" value="1"/>
</dbReference>
<dbReference type="Gene3D" id="3.30.70.790">
    <property type="entry name" value="UreE, C-terminal domain"/>
    <property type="match status" value="1"/>
</dbReference>
<dbReference type="HAMAP" id="MF_00822">
    <property type="entry name" value="UreE"/>
    <property type="match status" value="1"/>
</dbReference>
<dbReference type="InterPro" id="IPR012406">
    <property type="entry name" value="UreE"/>
</dbReference>
<dbReference type="InterPro" id="IPR007864">
    <property type="entry name" value="UreE_C_dom"/>
</dbReference>
<dbReference type="InterPro" id="IPR004029">
    <property type="entry name" value="UreE_N"/>
</dbReference>
<dbReference type="InterPro" id="IPR036118">
    <property type="entry name" value="UreE_N_sf"/>
</dbReference>
<dbReference type="NCBIfam" id="NF009751">
    <property type="entry name" value="PRK13261.1-1"/>
    <property type="match status" value="1"/>
</dbReference>
<dbReference type="NCBIfam" id="NF009762">
    <property type="entry name" value="PRK13263.1"/>
    <property type="match status" value="1"/>
</dbReference>
<dbReference type="Pfam" id="PF05194">
    <property type="entry name" value="UreE_C"/>
    <property type="match status" value="1"/>
</dbReference>
<dbReference type="Pfam" id="PF02814">
    <property type="entry name" value="UreE_N"/>
    <property type="match status" value="1"/>
</dbReference>
<dbReference type="SMART" id="SM00988">
    <property type="entry name" value="UreE_N"/>
    <property type="match status" value="1"/>
</dbReference>
<dbReference type="SUPFAM" id="SSF69737">
    <property type="entry name" value="Urease metallochaperone UreE, C-terminal domain"/>
    <property type="match status" value="1"/>
</dbReference>
<dbReference type="SUPFAM" id="SSF69287">
    <property type="entry name" value="Urease metallochaperone UreE, N-terminal domain"/>
    <property type="match status" value="1"/>
</dbReference>
<sequence>MLTISKLIPQGQGLAPVLLRRASTMELDWDVRQKSRFEATDSAGRQLGVFLPRGTVVRGGDVLVAEDGSLVKVDAAPQPVLRITPCSSHGTAFDLTRAAYHLGNRHVPIELKPDHLKIEPDHVLADMLRAMHLTVLAVNEPFEPENGAYATGGHAHDHDGEPEHVHGPGCQHAH</sequence>
<evidence type="ECO:0000255" key="1">
    <source>
        <dbReference type="HAMAP-Rule" id="MF_00822"/>
    </source>
</evidence>
<evidence type="ECO:0000256" key="2">
    <source>
        <dbReference type="SAM" id="MobiDB-lite"/>
    </source>
</evidence>
<reference key="1">
    <citation type="submission" date="2006-02" db="EMBL/GenBank/DDBJ databases">
        <title>Complete sequence of chromosome of Rhodoferax ferrireducens DSM 15236.</title>
        <authorList>
            <person name="Copeland A."/>
            <person name="Lucas S."/>
            <person name="Lapidus A."/>
            <person name="Barry K."/>
            <person name="Detter J.C."/>
            <person name="Glavina del Rio T."/>
            <person name="Hammon N."/>
            <person name="Israni S."/>
            <person name="Pitluck S."/>
            <person name="Brettin T."/>
            <person name="Bruce D."/>
            <person name="Han C."/>
            <person name="Tapia R."/>
            <person name="Gilna P."/>
            <person name="Kiss H."/>
            <person name="Schmutz J."/>
            <person name="Larimer F."/>
            <person name="Land M."/>
            <person name="Kyrpides N."/>
            <person name="Ivanova N."/>
            <person name="Richardson P."/>
        </authorList>
    </citation>
    <scope>NUCLEOTIDE SEQUENCE [LARGE SCALE GENOMIC DNA]</scope>
    <source>
        <strain>ATCC BAA-621 / DSM 15236 / T118</strain>
    </source>
</reference>
<comment type="function">
    <text evidence="1">Involved in urease metallocenter assembly. Binds nickel. Probably functions as a nickel donor during metallocenter assembly.</text>
</comment>
<comment type="subcellular location">
    <subcellularLocation>
        <location evidence="1">Cytoplasm</location>
    </subcellularLocation>
</comment>
<comment type="similarity">
    <text evidence="1">Belongs to the UreE family.</text>
</comment>
<accession>Q21SY8</accession>